<organism>
    <name type="scientific">Streptococcus pyogenes serotype M4 (strain MGAS10750)</name>
    <dbReference type="NCBI Taxonomy" id="370554"/>
    <lineage>
        <taxon>Bacteria</taxon>
        <taxon>Bacillati</taxon>
        <taxon>Bacillota</taxon>
        <taxon>Bacilli</taxon>
        <taxon>Lactobacillales</taxon>
        <taxon>Streptococcaceae</taxon>
        <taxon>Streptococcus</taxon>
    </lineage>
</organism>
<feature type="chain" id="PRO_1000065949" description="Orotidine 5'-phosphate decarboxylase">
    <location>
        <begin position="1"/>
        <end position="230"/>
    </location>
</feature>
<feature type="active site" description="Proton donor" evidence="1">
    <location>
        <position position="63"/>
    </location>
</feature>
<feature type="binding site" evidence="1">
    <location>
        <position position="11"/>
    </location>
    <ligand>
        <name>substrate</name>
    </ligand>
</feature>
<feature type="binding site" evidence="1">
    <location>
        <position position="34"/>
    </location>
    <ligand>
        <name>substrate</name>
    </ligand>
</feature>
<feature type="binding site" evidence="1">
    <location>
        <begin position="61"/>
        <end position="70"/>
    </location>
    <ligand>
        <name>substrate</name>
    </ligand>
</feature>
<feature type="binding site" evidence="1">
    <location>
        <position position="117"/>
    </location>
    <ligand>
        <name>substrate</name>
    </ligand>
</feature>
<feature type="binding site" evidence="1">
    <location>
        <position position="179"/>
    </location>
    <ligand>
        <name>substrate</name>
    </ligand>
</feature>
<feature type="binding site" evidence="1">
    <location>
        <position position="188"/>
    </location>
    <ligand>
        <name>substrate</name>
    </ligand>
</feature>
<feature type="binding site" evidence="1">
    <location>
        <position position="208"/>
    </location>
    <ligand>
        <name>substrate</name>
    </ligand>
</feature>
<feature type="binding site" evidence="1">
    <location>
        <position position="209"/>
    </location>
    <ligand>
        <name>substrate</name>
    </ligand>
</feature>
<comment type="function">
    <text evidence="1">Catalyzes the decarboxylation of orotidine 5'-monophosphate (OMP) to uridine 5'-monophosphate (UMP).</text>
</comment>
<comment type="catalytic activity">
    <reaction evidence="1">
        <text>orotidine 5'-phosphate + H(+) = UMP + CO2</text>
        <dbReference type="Rhea" id="RHEA:11596"/>
        <dbReference type="ChEBI" id="CHEBI:15378"/>
        <dbReference type="ChEBI" id="CHEBI:16526"/>
        <dbReference type="ChEBI" id="CHEBI:57538"/>
        <dbReference type="ChEBI" id="CHEBI:57865"/>
        <dbReference type="EC" id="4.1.1.23"/>
    </reaction>
</comment>
<comment type="pathway">
    <text evidence="1">Pyrimidine metabolism; UMP biosynthesis via de novo pathway; UMP from orotate: step 2/2.</text>
</comment>
<comment type="subunit">
    <text evidence="1">Homodimer.</text>
</comment>
<comment type="similarity">
    <text evidence="1">Belongs to the OMP decarboxylase family. Type 1 subfamily.</text>
</comment>
<name>PYRF_STRPF</name>
<protein>
    <recommendedName>
        <fullName evidence="1">Orotidine 5'-phosphate decarboxylase</fullName>
        <ecNumber evidence="1">4.1.1.23</ecNumber>
    </recommendedName>
    <alternativeName>
        <fullName evidence="1">OMP decarboxylase</fullName>
        <shortName evidence="1">OMPDCase</shortName>
        <shortName evidence="1">OMPdecase</shortName>
    </alternativeName>
</protein>
<dbReference type="EC" id="4.1.1.23" evidence="1"/>
<dbReference type="EMBL" id="CP000262">
    <property type="protein sequence ID" value="ABF37745.1"/>
    <property type="molecule type" value="Genomic_DNA"/>
</dbReference>
<dbReference type="SMR" id="Q1J729"/>
<dbReference type="KEGG" id="spi:MGAS10750_Spy0795"/>
<dbReference type="HOGENOM" id="CLU_067069_1_1_9"/>
<dbReference type="UniPathway" id="UPA00070">
    <property type="reaction ID" value="UER00120"/>
</dbReference>
<dbReference type="Proteomes" id="UP000002434">
    <property type="component" value="Chromosome"/>
</dbReference>
<dbReference type="GO" id="GO:0005829">
    <property type="term" value="C:cytosol"/>
    <property type="evidence" value="ECO:0007669"/>
    <property type="project" value="TreeGrafter"/>
</dbReference>
<dbReference type="GO" id="GO:0004590">
    <property type="term" value="F:orotidine-5'-phosphate decarboxylase activity"/>
    <property type="evidence" value="ECO:0007669"/>
    <property type="project" value="UniProtKB-UniRule"/>
</dbReference>
<dbReference type="GO" id="GO:0006207">
    <property type="term" value="P:'de novo' pyrimidine nucleobase biosynthetic process"/>
    <property type="evidence" value="ECO:0007669"/>
    <property type="project" value="InterPro"/>
</dbReference>
<dbReference type="GO" id="GO:0044205">
    <property type="term" value="P:'de novo' UMP biosynthetic process"/>
    <property type="evidence" value="ECO:0007669"/>
    <property type="project" value="UniProtKB-UniRule"/>
</dbReference>
<dbReference type="CDD" id="cd04725">
    <property type="entry name" value="OMP_decarboxylase_like"/>
    <property type="match status" value="1"/>
</dbReference>
<dbReference type="FunFam" id="3.20.20.70:FF:000015">
    <property type="entry name" value="Orotidine 5'-phosphate decarboxylase"/>
    <property type="match status" value="1"/>
</dbReference>
<dbReference type="Gene3D" id="3.20.20.70">
    <property type="entry name" value="Aldolase class I"/>
    <property type="match status" value="1"/>
</dbReference>
<dbReference type="HAMAP" id="MF_01200_B">
    <property type="entry name" value="OMPdecase_type1_B"/>
    <property type="match status" value="1"/>
</dbReference>
<dbReference type="InterPro" id="IPR013785">
    <property type="entry name" value="Aldolase_TIM"/>
</dbReference>
<dbReference type="InterPro" id="IPR014732">
    <property type="entry name" value="OMPdecase"/>
</dbReference>
<dbReference type="InterPro" id="IPR018089">
    <property type="entry name" value="OMPdecase_AS"/>
</dbReference>
<dbReference type="InterPro" id="IPR047596">
    <property type="entry name" value="OMPdecase_bac"/>
</dbReference>
<dbReference type="InterPro" id="IPR001754">
    <property type="entry name" value="OMPdeCOase_dom"/>
</dbReference>
<dbReference type="InterPro" id="IPR011060">
    <property type="entry name" value="RibuloseP-bd_barrel"/>
</dbReference>
<dbReference type="NCBIfam" id="NF001273">
    <property type="entry name" value="PRK00230.1"/>
    <property type="match status" value="1"/>
</dbReference>
<dbReference type="NCBIfam" id="TIGR01740">
    <property type="entry name" value="pyrF"/>
    <property type="match status" value="1"/>
</dbReference>
<dbReference type="PANTHER" id="PTHR32119">
    <property type="entry name" value="OROTIDINE 5'-PHOSPHATE DECARBOXYLASE"/>
    <property type="match status" value="1"/>
</dbReference>
<dbReference type="PANTHER" id="PTHR32119:SF2">
    <property type="entry name" value="OROTIDINE 5'-PHOSPHATE DECARBOXYLASE"/>
    <property type="match status" value="1"/>
</dbReference>
<dbReference type="Pfam" id="PF00215">
    <property type="entry name" value="OMPdecase"/>
    <property type="match status" value="1"/>
</dbReference>
<dbReference type="SMART" id="SM00934">
    <property type="entry name" value="OMPdecase"/>
    <property type="match status" value="1"/>
</dbReference>
<dbReference type="SUPFAM" id="SSF51366">
    <property type="entry name" value="Ribulose-phoshate binding barrel"/>
    <property type="match status" value="1"/>
</dbReference>
<dbReference type="PROSITE" id="PS00156">
    <property type="entry name" value="OMPDECASE"/>
    <property type="match status" value="1"/>
</dbReference>
<accession>Q1J729</accession>
<proteinExistence type="inferred from homology"/>
<evidence type="ECO:0000255" key="1">
    <source>
        <dbReference type="HAMAP-Rule" id="MF_01200"/>
    </source>
</evidence>
<gene>
    <name evidence="1" type="primary">pyrF</name>
    <name type="ordered locus">MGAS10750_Spy0795</name>
</gene>
<sequence length="230" mass="25004">MKEERPIIALDFSSFEETKAFLDLFPAEEKLYVKIGMELYYAQGPDIVRYIKSLGHNVFLDLKLHDIPNTVRAAMAVLKELDIDMATVHAAGGVEMLKAAREGLGQGPTLIAVTQLTSTSEDQMRGDQNIQTSLLESVLHYSKGAAKAQLDGVVCSAQEVEAIKAVTPTGFTCLTPGIRPKGSNIGDQKRVMTPNQARRIGSDYIVVGRPITQAKDPVAAYQAIKAEWAG</sequence>
<keyword id="KW-0210">Decarboxylase</keyword>
<keyword id="KW-0456">Lyase</keyword>
<keyword id="KW-0665">Pyrimidine biosynthesis</keyword>
<reference key="1">
    <citation type="journal article" date="2006" name="Proc. Natl. Acad. Sci. U.S.A.">
        <title>Molecular genetic anatomy of inter- and intraserotype variation in the human bacterial pathogen group A Streptococcus.</title>
        <authorList>
            <person name="Beres S.B."/>
            <person name="Richter E.W."/>
            <person name="Nagiec M.J."/>
            <person name="Sumby P."/>
            <person name="Porcella S.F."/>
            <person name="DeLeo F.R."/>
            <person name="Musser J.M."/>
        </authorList>
    </citation>
    <scope>NUCLEOTIDE SEQUENCE [LARGE SCALE GENOMIC DNA]</scope>
    <source>
        <strain>MGAS10750</strain>
    </source>
</reference>